<organism evidence="3">
    <name type="scientific">Nigella sativa</name>
    <name type="common">Black cumin</name>
    <dbReference type="NCBI Taxonomy" id="555479"/>
    <lineage>
        <taxon>Eukaryota</taxon>
        <taxon>Viridiplantae</taxon>
        <taxon>Streptophyta</taxon>
        <taxon>Embryophyta</taxon>
        <taxon>Tracheophyta</taxon>
        <taxon>Spermatophyta</taxon>
        <taxon>Magnoliopsida</taxon>
        <taxon>Ranunculales</taxon>
        <taxon>Ranunculaceae</taxon>
        <taxon>Ranunculoideae</taxon>
        <taxon>Nigelleae</taxon>
        <taxon>Nigella</taxon>
    </lineage>
</organism>
<keyword id="KW-0044">Antibiotic</keyword>
<keyword id="KW-0929">Antimicrobial</keyword>
<keyword id="KW-0204">Cytolysis</keyword>
<keyword id="KW-0903">Direct protein sequencing</keyword>
<keyword id="KW-1015">Disulfide bond</keyword>
<keyword id="KW-0295">Fungicide</keyword>
<keyword id="KW-0611">Plant defense</keyword>
<keyword id="KW-0964">Secreted</keyword>
<keyword id="KW-0800">Toxin</keyword>
<accession>C0HJI0</accession>
<evidence type="ECO:0000250" key="1">
    <source>
        <dbReference type="UniProtKB" id="P21742"/>
    </source>
</evidence>
<evidence type="ECO:0000269" key="2">
    <source ref="1"/>
</evidence>
<evidence type="ECO:0000303" key="3">
    <source ref="1"/>
</evidence>
<evidence type="ECO:0000305" key="4"/>
<feature type="peptide" id="PRO_0000440580" description="Thionin NsW2" evidence="2">
    <location>
        <begin position="1"/>
        <end position="35" status="greater than"/>
    </location>
</feature>
<feature type="disulfide bond" evidence="1">
    <location>
        <begin position="3"/>
        <end status="unknown"/>
    </location>
</feature>
<feature type="disulfide bond" evidence="1">
    <location>
        <begin position="4"/>
        <end position="32"/>
    </location>
</feature>
<feature type="disulfide bond" evidence="1">
    <location>
        <begin position="12"/>
        <end position="30"/>
    </location>
</feature>
<feature type="disulfide bond" evidence="1">
    <location>
        <begin position="16"/>
        <end position="26"/>
    </location>
</feature>
<feature type="non-terminal residue" evidence="3">
    <location>
        <position position="35"/>
    </location>
</feature>
<protein>
    <recommendedName>
        <fullName evidence="3">Thionin NsW2</fullName>
    </recommendedName>
</protein>
<reference evidence="4" key="1">
    <citation type="journal article" date="2016" name="Int. J. Pept. Res. Ther.">
        <title>Novel Thionins from Black Seed (Nigella sativa L.) Demonstrate Antimicrobial Activity.</title>
        <authorList>
            <person name="Vasilchenko A.S."/>
            <person name="Smirnov A.N."/>
            <person name="Zavriev S.K."/>
            <person name="Grishin E.V."/>
            <person name="Vasilchenko A.V."/>
            <person name="Rogozhin E.A."/>
        </authorList>
    </citation>
    <scope>PROTEIN SEQUENCE</scope>
    <scope>FUNCTION</scope>
    <scope>PRESENCE OF DISULFIDE BONDS</scope>
    <scope>MASS SPECTROMETRY</scope>
    <source>
        <tissue evidence="3">Seed</tissue>
    </source>
</reference>
<proteinExistence type="evidence at protein level"/>
<name>THNW2_NIGSA</name>
<sequence>KSCCKNTLGRNCYNTCRFIKKPRKTCAGLCGCKIS</sequence>
<dbReference type="SMR" id="C0HJI0"/>
<dbReference type="GO" id="GO:0005576">
    <property type="term" value="C:extracellular region"/>
    <property type="evidence" value="ECO:0007669"/>
    <property type="project" value="UniProtKB-SubCell"/>
</dbReference>
<dbReference type="GO" id="GO:0090729">
    <property type="term" value="F:toxin activity"/>
    <property type="evidence" value="ECO:0007669"/>
    <property type="project" value="UniProtKB-KW"/>
</dbReference>
<dbReference type="GO" id="GO:0050832">
    <property type="term" value="P:defense response to fungus"/>
    <property type="evidence" value="ECO:0000314"/>
    <property type="project" value="UniProtKB"/>
</dbReference>
<dbReference type="GO" id="GO:0050830">
    <property type="term" value="P:defense response to Gram-positive bacterium"/>
    <property type="evidence" value="ECO:0000314"/>
    <property type="project" value="UniProtKB"/>
</dbReference>
<dbReference type="GO" id="GO:0001897">
    <property type="term" value="P:symbiont-mediated cytolysis of host cell"/>
    <property type="evidence" value="ECO:0000314"/>
    <property type="project" value="UniProtKB"/>
</dbReference>
<dbReference type="FunFam" id="3.30.1350.10:FF:000001">
    <property type="entry name" value="Hellethionin-D"/>
    <property type="match status" value="1"/>
</dbReference>
<dbReference type="Gene3D" id="3.30.1350.10">
    <property type="entry name" value="Thionin-like"/>
    <property type="match status" value="1"/>
</dbReference>
<dbReference type="InterPro" id="IPR001010">
    <property type="entry name" value="Thionin"/>
</dbReference>
<dbReference type="InterPro" id="IPR036391">
    <property type="entry name" value="Thionin-like_sf"/>
</dbReference>
<dbReference type="Pfam" id="PF00321">
    <property type="entry name" value="Thionin"/>
    <property type="match status" value="1"/>
</dbReference>
<dbReference type="PRINTS" id="PR00287">
    <property type="entry name" value="THIONIN"/>
</dbReference>
<dbReference type="SUPFAM" id="SSF57429">
    <property type="entry name" value="Crambin-like"/>
    <property type="match status" value="1"/>
</dbReference>
<dbReference type="PROSITE" id="PS00271">
    <property type="entry name" value="THIONIN"/>
    <property type="match status" value="1"/>
</dbReference>
<comment type="function">
    <text evidence="2 4">Antimicrobial peptide disrupting membranes. Has antibacterial against Gram-positive bacteria S.aureus (MIC=6.5 uM) and B.subtilis (MIC=3.25 uM) but not against Gram-negative bacterium E.coli. Has antifungal activity against C.albicans (MIC=3.25 uM).</text>
</comment>
<comment type="subcellular location">
    <subcellularLocation>
        <location evidence="4">Secreted</location>
    </subcellularLocation>
</comment>
<comment type="PTM">
    <text evidence="2">Contains 4 disulfide bonds.</text>
</comment>
<comment type="mass spectrometry"/>
<comment type="similarity">
    <text evidence="4">Belongs to the plant thionin (TC 1.C.44) family.</text>
</comment>